<dbReference type="EC" id="1.15.1.1"/>
<dbReference type="EMBL" id="M37151">
    <property type="protein sequence ID" value="AAA34195.1"/>
    <property type="molecule type" value="mRNA"/>
</dbReference>
<dbReference type="EMBL" id="X14041">
    <property type="protein sequence ID" value="CAA32200.1"/>
    <property type="molecule type" value="mRNA"/>
</dbReference>
<dbReference type="EMBL" id="X77175">
    <property type="status" value="NOT_ANNOTATED_CDS"/>
    <property type="molecule type" value="Genomic_DNA"/>
</dbReference>
<dbReference type="EMBL" id="X77176">
    <property type="status" value="NOT_ANNOTATED_CDS"/>
    <property type="molecule type" value="Genomic_DNA"/>
</dbReference>
<dbReference type="PIR" id="S48021">
    <property type="entry name" value="S48021"/>
</dbReference>
<dbReference type="PDB" id="3HOG">
    <property type="method" value="X-ray"/>
    <property type="resolution" value="1.85 A"/>
    <property type="chains" value="A=64-217"/>
</dbReference>
<dbReference type="PDB" id="3KM1">
    <property type="method" value="X-ray"/>
    <property type="resolution" value="2.00 A"/>
    <property type="chains" value="A/B=64-217"/>
</dbReference>
<dbReference type="PDB" id="3KM2">
    <property type="method" value="X-ray"/>
    <property type="resolution" value="3.10 A"/>
    <property type="chains" value="A/B/C/D/E/F/G/H/I/J/K/L/M/N/O/P/Q/R/S/T/U/V/W/X=64-217"/>
</dbReference>
<dbReference type="PDB" id="3MKG">
    <property type="method" value="X-ray"/>
    <property type="resolution" value="2.20 A"/>
    <property type="chains" value="A/B=64-217"/>
</dbReference>
<dbReference type="PDB" id="3PU7">
    <property type="method" value="X-ray"/>
    <property type="resolution" value="1.80 A"/>
    <property type="chains" value="A/B=64-217"/>
</dbReference>
<dbReference type="PDB" id="3S0P">
    <property type="method" value="X-ray"/>
    <property type="resolution" value="3.00 A"/>
    <property type="chains" value="A/B/C/D/E/F/G/H=64-217"/>
</dbReference>
<dbReference type="PDBsum" id="3HOG"/>
<dbReference type="PDBsum" id="3KM1"/>
<dbReference type="PDBsum" id="3KM2"/>
<dbReference type="PDBsum" id="3MKG"/>
<dbReference type="PDBsum" id="3PU7"/>
<dbReference type="PDBsum" id="3S0P"/>
<dbReference type="SMR" id="P14831"/>
<dbReference type="FunCoup" id="P14831">
    <property type="interactions" value="725"/>
</dbReference>
<dbReference type="STRING" id="4081.P14831"/>
<dbReference type="Allergome" id="11322">
    <property type="allergen name" value="Sola l SOD"/>
</dbReference>
<dbReference type="PaxDb" id="4081-Solyc11g066390.1.1"/>
<dbReference type="eggNOG" id="KOG0441">
    <property type="taxonomic scope" value="Eukaryota"/>
</dbReference>
<dbReference type="InParanoid" id="P14831"/>
<dbReference type="EvolutionaryTrace" id="P14831"/>
<dbReference type="Proteomes" id="UP000004994">
    <property type="component" value="Unplaced"/>
</dbReference>
<dbReference type="ExpressionAtlas" id="P14831">
    <property type="expression patterns" value="baseline and differential"/>
</dbReference>
<dbReference type="GO" id="GO:0009507">
    <property type="term" value="C:chloroplast"/>
    <property type="evidence" value="ECO:0007669"/>
    <property type="project" value="UniProtKB-SubCell"/>
</dbReference>
<dbReference type="GO" id="GO:0005507">
    <property type="term" value="F:copper ion binding"/>
    <property type="evidence" value="ECO:0000318"/>
    <property type="project" value="GO_Central"/>
</dbReference>
<dbReference type="GO" id="GO:0004784">
    <property type="term" value="F:superoxide dismutase activity"/>
    <property type="evidence" value="ECO:0000318"/>
    <property type="project" value="GO_Central"/>
</dbReference>
<dbReference type="GO" id="GO:0019430">
    <property type="term" value="P:removal of superoxide radicals"/>
    <property type="evidence" value="ECO:0000318"/>
    <property type="project" value="GO_Central"/>
</dbReference>
<dbReference type="CDD" id="cd00305">
    <property type="entry name" value="Cu-Zn_Superoxide_Dismutase"/>
    <property type="match status" value="1"/>
</dbReference>
<dbReference type="FunFam" id="2.60.40.200:FF:000003">
    <property type="entry name" value="Superoxide dismutase [Cu-Zn], chloroplastic"/>
    <property type="match status" value="1"/>
</dbReference>
<dbReference type="Gene3D" id="2.60.40.200">
    <property type="entry name" value="Superoxide dismutase, copper/zinc binding domain"/>
    <property type="match status" value="1"/>
</dbReference>
<dbReference type="InterPro" id="IPR036423">
    <property type="entry name" value="SOD-like_Cu/Zn_dom_sf"/>
</dbReference>
<dbReference type="InterPro" id="IPR024134">
    <property type="entry name" value="SOD_Cu/Zn_/chaperone"/>
</dbReference>
<dbReference type="InterPro" id="IPR018152">
    <property type="entry name" value="SOD_Cu/Zn_BS"/>
</dbReference>
<dbReference type="InterPro" id="IPR001424">
    <property type="entry name" value="SOD_Cu_Zn_dom"/>
</dbReference>
<dbReference type="PANTHER" id="PTHR10003">
    <property type="entry name" value="SUPEROXIDE DISMUTASE CU-ZN -RELATED"/>
    <property type="match status" value="1"/>
</dbReference>
<dbReference type="Pfam" id="PF00080">
    <property type="entry name" value="Sod_Cu"/>
    <property type="match status" value="1"/>
</dbReference>
<dbReference type="PRINTS" id="PR00068">
    <property type="entry name" value="CUZNDISMTASE"/>
</dbReference>
<dbReference type="SUPFAM" id="SSF49329">
    <property type="entry name" value="Cu,Zn superoxide dismutase-like"/>
    <property type="match status" value="1"/>
</dbReference>
<dbReference type="PROSITE" id="PS00087">
    <property type="entry name" value="SOD_CU_ZN_1"/>
    <property type="match status" value="1"/>
</dbReference>
<dbReference type="PROSITE" id="PS00332">
    <property type="entry name" value="SOD_CU_ZN_2"/>
    <property type="match status" value="1"/>
</dbReference>
<organism>
    <name type="scientific">Solanum lycopersicum</name>
    <name type="common">Tomato</name>
    <name type="synonym">Lycopersicon esculentum</name>
    <dbReference type="NCBI Taxonomy" id="4081"/>
    <lineage>
        <taxon>Eukaryota</taxon>
        <taxon>Viridiplantae</taxon>
        <taxon>Streptophyta</taxon>
        <taxon>Embryophyta</taxon>
        <taxon>Tracheophyta</taxon>
        <taxon>Spermatophyta</taxon>
        <taxon>Magnoliopsida</taxon>
        <taxon>eudicotyledons</taxon>
        <taxon>Gunneridae</taxon>
        <taxon>Pentapetalae</taxon>
        <taxon>asterids</taxon>
        <taxon>lamiids</taxon>
        <taxon>Solanales</taxon>
        <taxon>Solanaceae</taxon>
        <taxon>Solanoideae</taxon>
        <taxon>Solaneae</taxon>
        <taxon>Solanum</taxon>
        <taxon>Solanum subgen. Lycopersicon</taxon>
    </lineage>
</organism>
<keyword id="KW-0002">3D-structure</keyword>
<keyword id="KW-0049">Antioxidant</keyword>
<keyword id="KW-0150">Chloroplast</keyword>
<keyword id="KW-0186">Copper</keyword>
<keyword id="KW-1015">Disulfide bond</keyword>
<keyword id="KW-0479">Metal-binding</keyword>
<keyword id="KW-0560">Oxidoreductase</keyword>
<keyword id="KW-0934">Plastid</keyword>
<keyword id="KW-1185">Reference proteome</keyword>
<keyword id="KW-0809">Transit peptide</keyword>
<keyword id="KW-0862">Zinc</keyword>
<proteinExistence type="evidence at protein level"/>
<sequence length="217" mass="22228">MAAHSIFTTTSTTNSFLYPISSSSSSPNINSSFLGVSLNVNAKFGQSLTLYAVTTPKPLTVFAATKKAVAVLKGNSNVEGVVTLSQDDDGPTTVNVRITGLAPGLHGFHLHEYGDTTNGCMSTGAHFNPNKLTHGAPGDEIRHAGDLGNIVANADGVAEVTLVDNQIPLTGPNSVVGRALVVHELEDDLGKGGHELSLTTGNAGGRLACGVVGLTPI</sequence>
<reference key="1">
    <citation type="journal article" date="1988" name="Plant Mol. Biol.">
        <title>Isolation of two cDNA clones from tomato containing two different superoxide dismutase sequences.</title>
        <authorList>
            <person name="Perl-Treves R."/>
            <person name="Nacmias B."/>
            <person name="Aviv D."/>
            <person name="Zeelon E.P."/>
            <person name="Galun E."/>
        </authorList>
        <dbReference type="AGRICOLA" id="IND92000006"/>
    </citation>
    <scope>NUCLEOTIDE SEQUENCE</scope>
    <source>
        <strain>cv. Sherry</strain>
        <tissue>Leaf</tissue>
    </source>
</reference>
<reference key="2">
    <citation type="journal article" date="1994" name="Plant Mol. Biol.">
        <title>The tomato gene for the chloroplastic Cu,Zn superoxide dismutase: regulation of expression imposed in transgenic tobacco plants by a short promoter.</title>
        <authorList>
            <person name="Kardish N."/>
            <person name="Magal N."/>
            <person name="Aviv D."/>
            <person name="Galun E."/>
        </authorList>
    </citation>
    <scope>NUCLEOTIDE SEQUENCE [GENOMIC DNA]</scope>
</reference>
<accession>P14831</accession>
<gene>
    <name type="primary">SODCP.2</name>
</gene>
<comment type="function">
    <text>Destroys radicals which are normally produced within the cells and which are toxic to biological systems.</text>
</comment>
<comment type="catalytic activity">
    <reaction>
        <text>2 superoxide + 2 H(+) = H2O2 + O2</text>
        <dbReference type="Rhea" id="RHEA:20696"/>
        <dbReference type="ChEBI" id="CHEBI:15378"/>
        <dbReference type="ChEBI" id="CHEBI:15379"/>
        <dbReference type="ChEBI" id="CHEBI:16240"/>
        <dbReference type="ChEBI" id="CHEBI:18421"/>
        <dbReference type="EC" id="1.15.1.1"/>
    </reaction>
</comment>
<comment type="cofactor">
    <cofactor evidence="1">
        <name>Cu cation</name>
        <dbReference type="ChEBI" id="CHEBI:23378"/>
    </cofactor>
    <text evidence="1">Binds 1 copper ion per subunit.</text>
</comment>
<comment type="cofactor">
    <cofactor evidence="1">
        <name>Zn(2+)</name>
        <dbReference type="ChEBI" id="CHEBI:29105"/>
    </cofactor>
    <text evidence="1">Binds 1 zinc ion per subunit.</text>
</comment>
<comment type="subunit">
    <text evidence="1">Homotetramer.</text>
</comment>
<comment type="subcellular location">
    <subcellularLocation>
        <location>Plastid</location>
        <location>Chloroplast</location>
    </subcellularLocation>
</comment>
<comment type="similarity">
    <text evidence="2">Belongs to the Cu-Zn superoxide dismutase family.</text>
</comment>
<protein>
    <recommendedName>
        <fullName>Superoxide dismutase [Cu-Zn], chloroplastic</fullName>
        <ecNumber>1.15.1.1</ecNumber>
    </recommendedName>
</protein>
<evidence type="ECO:0000250" key="1"/>
<evidence type="ECO:0000305" key="2"/>
<evidence type="ECO:0007829" key="3">
    <source>
        <dbReference type="PDB" id="3HOG"/>
    </source>
</evidence>
<evidence type="ECO:0007829" key="4">
    <source>
        <dbReference type="PDB" id="3KM2"/>
    </source>
</evidence>
<evidence type="ECO:0007829" key="5">
    <source>
        <dbReference type="PDB" id="3MKG"/>
    </source>
</evidence>
<evidence type="ECO:0007829" key="6">
    <source>
        <dbReference type="PDB" id="3PU7"/>
    </source>
</evidence>
<feature type="transit peptide" description="Chloroplast">
    <location>
        <begin position="1"/>
        <end position="63"/>
    </location>
</feature>
<feature type="chain" id="PRO_0000032845" description="Superoxide dismutase [Cu-Zn], chloroplastic">
    <location>
        <begin position="64"/>
        <end position="217"/>
    </location>
</feature>
<feature type="binding site" evidence="1">
    <location>
        <position position="109"/>
    </location>
    <ligand>
        <name>Cu cation</name>
        <dbReference type="ChEBI" id="CHEBI:23378"/>
        <note>catalytic</note>
    </ligand>
</feature>
<feature type="binding site" evidence="1">
    <location>
        <position position="111"/>
    </location>
    <ligand>
        <name>Cu cation</name>
        <dbReference type="ChEBI" id="CHEBI:23378"/>
        <note>catalytic</note>
    </ligand>
</feature>
<feature type="binding site" evidence="1">
    <location>
        <position position="126"/>
    </location>
    <ligand>
        <name>Cu cation</name>
        <dbReference type="ChEBI" id="CHEBI:23378"/>
        <note>catalytic</note>
    </ligand>
</feature>
<feature type="binding site" evidence="1">
    <location>
        <position position="126"/>
    </location>
    <ligand>
        <name>Zn(2+)</name>
        <dbReference type="ChEBI" id="CHEBI:29105"/>
        <note>structural</note>
    </ligand>
</feature>
<feature type="binding site" evidence="1">
    <location>
        <position position="134"/>
    </location>
    <ligand>
        <name>Zn(2+)</name>
        <dbReference type="ChEBI" id="CHEBI:29105"/>
        <note>structural</note>
    </ligand>
</feature>
<feature type="binding site" evidence="1">
    <location>
        <position position="143"/>
    </location>
    <ligand>
        <name>Zn(2+)</name>
        <dbReference type="ChEBI" id="CHEBI:29105"/>
        <note>structural</note>
    </ligand>
</feature>
<feature type="binding site" evidence="1">
    <location>
        <position position="146"/>
    </location>
    <ligand>
        <name>Zn(2+)</name>
        <dbReference type="ChEBI" id="CHEBI:29105"/>
        <note>structural</note>
    </ligand>
</feature>
<feature type="binding site" evidence="1">
    <location>
        <position position="183"/>
    </location>
    <ligand>
        <name>Cu cation</name>
        <dbReference type="ChEBI" id="CHEBI:23378"/>
        <note>catalytic</note>
    </ligand>
</feature>
<feature type="disulfide bond" evidence="1">
    <location>
        <begin position="120"/>
        <end position="209"/>
    </location>
</feature>
<feature type="strand" evidence="6">
    <location>
        <begin position="65"/>
        <end position="73"/>
    </location>
</feature>
<feature type="strand" evidence="6">
    <location>
        <begin position="75"/>
        <end position="77"/>
    </location>
</feature>
<feature type="strand" evidence="6">
    <location>
        <begin position="79"/>
        <end position="87"/>
    </location>
</feature>
<feature type="strand" evidence="6">
    <location>
        <begin position="92"/>
        <end position="100"/>
    </location>
</feature>
<feature type="strand" evidence="6">
    <location>
        <begin position="103"/>
        <end position="112"/>
    </location>
</feature>
<feature type="helix" evidence="6">
    <location>
        <begin position="119"/>
        <end position="123"/>
    </location>
</feature>
<feature type="strand" evidence="5">
    <location>
        <begin position="125"/>
        <end position="128"/>
    </location>
</feature>
<feature type="turn" evidence="3">
    <location>
        <begin position="129"/>
        <end position="132"/>
    </location>
</feature>
<feature type="strand" evidence="6">
    <location>
        <begin position="146"/>
        <end position="152"/>
    </location>
</feature>
<feature type="strand" evidence="6">
    <location>
        <begin position="158"/>
        <end position="166"/>
    </location>
</feature>
<feature type="strand" evidence="6">
    <location>
        <begin position="169"/>
        <end position="171"/>
    </location>
</feature>
<feature type="strand" evidence="6">
    <location>
        <begin position="178"/>
        <end position="185"/>
    </location>
</feature>
<feature type="turn" evidence="4">
    <location>
        <begin position="189"/>
        <end position="192"/>
    </location>
</feature>
<feature type="turn" evidence="6">
    <location>
        <begin position="195"/>
        <end position="199"/>
    </location>
</feature>
<feature type="strand" evidence="6">
    <location>
        <begin position="206"/>
        <end position="211"/>
    </location>
</feature>
<name>SODCP_SOLLC</name>